<reference key="1">
    <citation type="journal article" date="2009" name="J. Bacteriol.">
        <title>Complete genome sequence of Haemophilus parasuis SH0165.</title>
        <authorList>
            <person name="Yue M."/>
            <person name="Yang F."/>
            <person name="Yang J."/>
            <person name="Bei W."/>
            <person name="Cai X."/>
            <person name="Chen L."/>
            <person name="Dong J."/>
            <person name="Zhou R."/>
            <person name="Jin M."/>
            <person name="Jin Q."/>
            <person name="Chen H."/>
        </authorList>
    </citation>
    <scope>NUCLEOTIDE SEQUENCE [LARGE SCALE GENOMIC DNA]</scope>
    <source>
        <strain>SH0165</strain>
    </source>
</reference>
<gene>
    <name evidence="2" type="primary">rnb</name>
    <name type="ordered locus">HAPS_0516</name>
</gene>
<dbReference type="EC" id="3.1.13.1" evidence="2"/>
<dbReference type="EMBL" id="CP001321">
    <property type="protein sequence ID" value="ACL32177.1"/>
    <property type="molecule type" value="Genomic_DNA"/>
</dbReference>
<dbReference type="RefSeq" id="WP_012621771.1">
    <property type="nucleotide sequence ID" value="NC_011852.1"/>
</dbReference>
<dbReference type="SMR" id="B8F4C5"/>
<dbReference type="STRING" id="557723.HAPS_0516"/>
<dbReference type="KEGG" id="hap:HAPS_0516"/>
<dbReference type="PATRIC" id="fig|557723.8.peg.522"/>
<dbReference type="HOGENOM" id="CLU_002333_7_3_6"/>
<dbReference type="Proteomes" id="UP000006743">
    <property type="component" value="Chromosome"/>
</dbReference>
<dbReference type="GO" id="GO:0005829">
    <property type="term" value="C:cytosol"/>
    <property type="evidence" value="ECO:0007669"/>
    <property type="project" value="UniProtKB-ARBA"/>
</dbReference>
<dbReference type="GO" id="GO:0008859">
    <property type="term" value="F:exoribonuclease II activity"/>
    <property type="evidence" value="ECO:0007669"/>
    <property type="project" value="UniProtKB-UniRule"/>
</dbReference>
<dbReference type="GO" id="GO:0003723">
    <property type="term" value="F:RNA binding"/>
    <property type="evidence" value="ECO:0007669"/>
    <property type="project" value="UniProtKB-KW"/>
</dbReference>
<dbReference type="GO" id="GO:0006402">
    <property type="term" value="P:mRNA catabolic process"/>
    <property type="evidence" value="ECO:0007669"/>
    <property type="project" value="UniProtKB-UniRule"/>
</dbReference>
<dbReference type="Gene3D" id="2.40.50.640">
    <property type="match status" value="1"/>
</dbReference>
<dbReference type="Gene3D" id="2.40.50.140">
    <property type="entry name" value="Nucleic acid-binding proteins"/>
    <property type="match status" value="2"/>
</dbReference>
<dbReference type="HAMAP" id="MF_01036">
    <property type="entry name" value="RNase_II"/>
    <property type="match status" value="1"/>
</dbReference>
<dbReference type="InterPro" id="IPR011129">
    <property type="entry name" value="CSD"/>
</dbReference>
<dbReference type="InterPro" id="IPR012340">
    <property type="entry name" value="NA-bd_OB-fold"/>
</dbReference>
<dbReference type="InterPro" id="IPR013223">
    <property type="entry name" value="RNase_B_OB_dom"/>
</dbReference>
<dbReference type="InterPro" id="IPR011804">
    <property type="entry name" value="RNase_II"/>
</dbReference>
<dbReference type="InterPro" id="IPR001900">
    <property type="entry name" value="RNase_II/R"/>
</dbReference>
<dbReference type="InterPro" id="IPR004476">
    <property type="entry name" value="RNase_II/RNase_R"/>
</dbReference>
<dbReference type="InterPro" id="IPR050180">
    <property type="entry name" value="RNR_Ribonuclease"/>
</dbReference>
<dbReference type="InterPro" id="IPR003029">
    <property type="entry name" value="S1_domain"/>
</dbReference>
<dbReference type="NCBIfam" id="TIGR00358">
    <property type="entry name" value="3_prime_RNase"/>
    <property type="match status" value="1"/>
</dbReference>
<dbReference type="NCBIfam" id="NF003455">
    <property type="entry name" value="PRK05054.1"/>
    <property type="match status" value="1"/>
</dbReference>
<dbReference type="NCBIfam" id="TIGR02062">
    <property type="entry name" value="RNase_B"/>
    <property type="match status" value="1"/>
</dbReference>
<dbReference type="PANTHER" id="PTHR23355:SF37">
    <property type="entry name" value="EXORIBONUCLEASE 2"/>
    <property type="match status" value="1"/>
</dbReference>
<dbReference type="PANTHER" id="PTHR23355">
    <property type="entry name" value="RIBONUCLEASE"/>
    <property type="match status" value="1"/>
</dbReference>
<dbReference type="Pfam" id="PF08206">
    <property type="entry name" value="OB_RNB"/>
    <property type="match status" value="1"/>
</dbReference>
<dbReference type="Pfam" id="PF00773">
    <property type="entry name" value="RNB"/>
    <property type="match status" value="1"/>
</dbReference>
<dbReference type="Pfam" id="PF00575">
    <property type="entry name" value="S1"/>
    <property type="match status" value="1"/>
</dbReference>
<dbReference type="SMART" id="SM00357">
    <property type="entry name" value="CSP"/>
    <property type="match status" value="1"/>
</dbReference>
<dbReference type="SMART" id="SM00955">
    <property type="entry name" value="RNB"/>
    <property type="match status" value="1"/>
</dbReference>
<dbReference type="SMART" id="SM00316">
    <property type="entry name" value="S1"/>
    <property type="match status" value="1"/>
</dbReference>
<dbReference type="SUPFAM" id="SSF50249">
    <property type="entry name" value="Nucleic acid-binding proteins"/>
    <property type="match status" value="3"/>
</dbReference>
<dbReference type="PROSITE" id="PS50126">
    <property type="entry name" value="S1"/>
    <property type="match status" value="1"/>
</dbReference>
<comment type="function">
    <text evidence="2">Involved in mRNA degradation. Hydrolyzes single-stranded polyribonucleotides processively in the 3' to 5' direction.</text>
</comment>
<comment type="catalytic activity">
    <reaction evidence="2">
        <text>Exonucleolytic cleavage in the 3'- to 5'-direction to yield nucleoside 5'-phosphates.</text>
        <dbReference type="EC" id="3.1.13.1"/>
    </reaction>
</comment>
<comment type="subcellular location">
    <subcellularLocation>
        <location evidence="2">Cytoplasm</location>
    </subcellularLocation>
</comment>
<comment type="similarity">
    <text evidence="2">Belongs to the RNR ribonuclease family. RNase II subfamily.</text>
</comment>
<organism>
    <name type="scientific">Glaesserella parasuis serovar 5 (strain SH0165)</name>
    <name type="common">Haemophilus parasuis</name>
    <dbReference type="NCBI Taxonomy" id="557723"/>
    <lineage>
        <taxon>Bacteria</taxon>
        <taxon>Pseudomonadati</taxon>
        <taxon>Pseudomonadota</taxon>
        <taxon>Gammaproteobacteria</taxon>
        <taxon>Pasteurellales</taxon>
        <taxon>Pasteurellaceae</taxon>
        <taxon>Glaesserella</taxon>
    </lineage>
</organism>
<evidence type="ECO:0000255" key="1"/>
<evidence type="ECO:0000255" key="2">
    <source>
        <dbReference type="HAMAP-Rule" id="MF_01036"/>
    </source>
</evidence>
<sequence length="659" mass="75735">MFQNNPLLAQLKQQIEASKEYVEGVVKTSDKSYGFLECEKNSYFIPPAEMKKVMHGDKVKAVVKRDGDKEQVEIDSLLEPMLERFIAQVRFNKDGKLQLAVDHPSINNFIPANTQKKVTEPLENGDWVVAQLKTHPLRDDRFFFAQVTQFICKADDNFAPWWVTLARHEQPREPVANEKSYELQDQVEREDLTHLYFTTIDSASTKDMDDALYVEPISENGTQTGWRLVVAIADPTAYIPEQSAIEKAARQRCFTNYLPGFNIPMLPRELSDDLCSLVPNEKRPALVGYIETDLSGNVVGEARFVSAWVQSKARLVYDEVSDYLEKVENHWTPDCAETAQQIDWLHQFTLARIDWRSKNALLFKEQGDYSFELAEDGAVKAIHIDYRRIANQMIEEAMIIANICAAQFLDKYAHTGVFNTHSGFDSKNLEPARKFLLDTLANDENRESLSERYSPERLSTLEGYCEMRRDIEQFPENFLEMRLRRYLTFAEFKATSAPHLGLGISHYATWTSPIRKYGDMVNHRLIKQVLSNQTAKPVEETVLARLQEARKQNRMVERDIADWLYARYLEPMVEQNVEFDGEIQDVSRGGLRVKVIENGASVFVPFSTLHNNKEEMLFSPEEIALYIKGEKAYQIGQAVKVKLKEVRVETRSVVGDVLI</sequence>
<proteinExistence type="inferred from homology"/>
<name>RNB_GLAP5</name>
<protein>
    <recommendedName>
        <fullName evidence="2">Exoribonuclease 2</fullName>
        <ecNumber evidence="2">3.1.13.1</ecNumber>
    </recommendedName>
    <alternativeName>
        <fullName evidence="2">Exoribonuclease II</fullName>
        <shortName evidence="2">RNase II</shortName>
        <shortName evidence="2">Ribonuclease II</shortName>
    </alternativeName>
</protein>
<keyword id="KW-0963">Cytoplasm</keyword>
<keyword id="KW-0269">Exonuclease</keyword>
<keyword id="KW-0378">Hydrolase</keyword>
<keyword id="KW-0540">Nuclease</keyword>
<keyword id="KW-1185">Reference proteome</keyword>
<keyword id="KW-0694">RNA-binding</keyword>
<feature type="chain" id="PRO_1000149458" description="Exoribonuclease 2">
    <location>
        <begin position="1"/>
        <end position="659"/>
    </location>
</feature>
<feature type="domain" description="RNB" evidence="1">
    <location>
        <begin position="189"/>
        <end position="532"/>
    </location>
</feature>
<feature type="domain" description="S1 motif" evidence="2">
    <location>
        <begin position="576"/>
        <end position="658"/>
    </location>
</feature>
<accession>B8F4C5</accession>